<evidence type="ECO:0000255" key="1">
    <source>
        <dbReference type="HAMAP-Rule" id="MF_00034"/>
    </source>
</evidence>
<protein>
    <recommendedName>
        <fullName evidence="1">Crossover junction endodeoxyribonuclease RuvC</fullName>
        <ecNumber evidence="1">3.1.21.10</ecNumber>
    </recommendedName>
    <alternativeName>
        <fullName evidence="1">Holliday junction nuclease RuvC</fullName>
    </alternativeName>
    <alternativeName>
        <fullName evidence="1">Holliday junction resolvase RuvC</fullName>
    </alternativeName>
</protein>
<accession>A7H193</accession>
<proteinExistence type="inferred from homology"/>
<sequence>MKILGIDPGSRNCGYAIIEKNVRKTALIEAGLIKIKPNTLQYQITELCEGLDVIFKNHKFDEVAIEDIFFAYNPKTVLKLAQFRGALSLKILQLHGDFAEYTPLQVKKAVTGKAKAQKEQVAFMVKKILGITKEIKPLDITDAIAVALTHANNLCLR</sequence>
<gene>
    <name evidence="1" type="primary">ruvC</name>
    <name type="ordered locus">Ccur92_19310</name>
    <name type="ORF">CCV52592_2057</name>
</gene>
<keyword id="KW-0963">Cytoplasm</keyword>
<keyword id="KW-0227">DNA damage</keyword>
<keyword id="KW-0233">DNA recombination</keyword>
<keyword id="KW-0234">DNA repair</keyword>
<keyword id="KW-0238">DNA-binding</keyword>
<keyword id="KW-0255">Endonuclease</keyword>
<keyword id="KW-0378">Hydrolase</keyword>
<keyword id="KW-0460">Magnesium</keyword>
<keyword id="KW-0479">Metal-binding</keyword>
<keyword id="KW-0540">Nuclease</keyword>
<keyword id="KW-1185">Reference proteome</keyword>
<feature type="chain" id="PRO_1000002737" description="Crossover junction endodeoxyribonuclease RuvC">
    <location>
        <begin position="1"/>
        <end position="157"/>
    </location>
</feature>
<feature type="active site" evidence="1">
    <location>
        <position position="7"/>
    </location>
</feature>
<feature type="active site" evidence="1">
    <location>
        <position position="66"/>
    </location>
</feature>
<feature type="active site" evidence="1">
    <location>
        <position position="139"/>
    </location>
</feature>
<feature type="binding site" evidence="1">
    <location>
        <position position="7"/>
    </location>
    <ligand>
        <name>Mg(2+)</name>
        <dbReference type="ChEBI" id="CHEBI:18420"/>
        <label>1</label>
    </ligand>
</feature>
<feature type="binding site" evidence="1">
    <location>
        <position position="66"/>
    </location>
    <ligand>
        <name>Mg(2+)</name>
        <dbReference type="ChEBI" id="CHEBI:18420"/>
        <label>2</label>
    </ligand>
</feature>
<feature type="binding site" evidence="1">
    <location>
        <position position="139"/>
    </location>
    <ligand>
        <name>Mg(2+)</name>
        <dbReference type="ChEBI" id="CHEBI:18420"/>
        <label>1</label>
    </ligand>
</feature>
<dbReference type="EC" id="3.1.21.10" evidence="1"/>
<dbReference type="EMBL" id="CP000767">
    <property type="protein sequence ID" value="EAU00849.1"/>
    <property type="molecule type" value="Genomic_DNA"/>
</dbReference>
<dbReference type="RefSeq" id="WP_009649725.1">
    <property type="nucleotide sequence ID" value="NC_009715.2"/>
</dbReference>
<dbReference type="SMR" id="A7H193"/>
<dbReference type="STRING" id="360105.CCV52592_2057"/>
<dbReference type="KEGG" id="ccv:CCV52592_2057"/>
<dbReference type="HOGENOM" id="CLU_091257_3_0_7"/>
<dbReference type="OrthoDB" id="9805499at2"/>
<dbReference type="Proteomes" id="UP000006380">
    <property type="component" value="Chromosome"/>
</dbReference>
<dbReference type="GO" id="GO:0005737">
    <property type="term" value="C:cytoplasm"/>
    <property type="evidence" value="ECO:0007669"/>
    <property type="project" value="UniProtKB-SubCell"/>
</dbReference>
<dbReference type="GO" id="GO:0048476">
    <property type="term" value="C:Holliday junction resolvase complex"/>
    <property type="evidence" value="ECO:0007669"/>
    <property type="project" value="UniProtKB-UniRule"/>
</dbReference>
<dbReference type="GO" id="GO:0008821">
    <property type="term" value="F:crossover junction DNA endonuclease activity"/>
    <property type="evidence" value="ECO:0007669"/>
    <property type="project" value="UniProtKB-UniRule"/>
</dbReference>
<dbReference type="GO" id="GO:0003677">
    <property type="term" value="F:DNA binding"/>
    <property type="evidence" value="ECO:0007669"/>
    <property type="project" value="UniProtKB-KW"/>
</dbReference>
<dbReference type="GO" id="GO:0000287">
    <property type="term" value="F:magnesium ion binding"/>
    <property type="evidence" value="ECO:0007669"/>
    <property type="project" value="UniProtKB-UniRule"/>
</dbReference>
<dbReference type="GO" id="GO:0006310">
    <property type="term" value="P:DNA recombination"/>
    <property type="evidence" value="ECO:0007669"/>
    <property type="project" value="UniProtKB-UniRule"/>
</dbReference>
<dbReference type="GO" id="GO:0006281">
    <property type="term" value="P:DNA repair"/>
    <property type="evidence" value="ECO:0007669"/>
    <property type="project" value="UniProtKB-UniRule"/>
</dbReference>
<dbReference type="CDD" id="cd16962">
    <property type="entry name" value="RuvC"/>
    <property type="match status" value="1"/>
</dbReference>
<dbReference type="FunFam" id="3.30.420.10:FF:000002">
    <property type="entry name" value="Crossover junction endodeoxyribonuclease RuvC"/>
    <property type="match status" value="1"/>
</dbReference>
<dbReference type="Gene3D" id="3.30.420.10">
    <property type="entry name" value="Ribonuclease H-like superfamily/Ribonuclease H"/>
    <property type="match status" value="1"/>
</dbReference>
<dbReference type="HAMAP" id="MF_00034">
    <property type="entry name" value="RuvC"/>
    <property type="match status" value="1"/>
</dbReference>
<dbReference type="InterPro" id="IPR012337">
    <property type="entry name" value="RNaseH-like_sf"/>
</dbReference>
<dbReference type="InterPro" id="IPR036397">
    <property type="entry name" value="RNaseH_sf"/>
</dbReference>
<dbReference type="InterPro" id="IPR020563">
    <property type="entry name" value="X-over_junc_endoDNase_Mg_BS"/>
</dbReference>
<dbReference type="InterPro" id="IPR002176">
    <property type="entry name" value="X-over_junc_endoDNase_RuvC"/>
</dbReference>
<dbReference type="NCBIfam" id="TIGR00228">
    <property type="entry name" value="ruvC"/>
    <property type="match status" value="1"/>
</dbReference>
<dbReference type="PANTHER" id="PTHR30194">
    <property type="entry name" value="CROSSOVER JUNCTION ENDODEOXYRIBONUCLEASE RUVC"/>
    <property type="match status" value="1"/>
</dbReference>
<dbReference type="PANTHER" id="PTHR30194:SF3">
    <property type="entry name" value="CROSSOVER JUNCTION ENDODEOXYRIBONUCLEASE RUVC"/>
    <property type="match status" value="1"/>
</dbReference>
<dbReference type="Pfam" id="PF02075">
    <property type="entry name" value="RuvC"/>
    <property type="match status" value="1"/>
</dbReference>
<dbReference type="PRINTS" id="PR00696">
    <property type="entry name" value="RSOLVASERUVC"/>
</dbReference>
<dbReference type="SUPFAM" id="SSF53098">
    <property type="entry name" value="Ribonuclease H-like"/>
    <property type="match status" value="1"/>
</dbReference>
<dbReference type="PROSITE" id="PS01321">
    <property type="entry name" value="RUVC"/>
    <property type="match status" value="1"/>
</dbReference>
<organism>
    <name type="scientific">Campylobacter curvus (strain 525.92)</name>
    <dbReference type="NCBI Taxonomy" id="360105"/>
    <lineage>
        <taxon>Bacteria</taxon>
        <taxon>Pseudomonadati</taxon>
        <taxon>Campylobacterota</taxon>
        <taxon>Epsilonproteobacteria</taxon>
        <taxon>Campylobacterales</taxon>
        <taxon>Campylobacteraceae</taxon>
        <taxon>Campylobacter</taxon>
    </lineage>
</organism>
<comment type="function">
    <text evidence="1">The RuvA-RuvB-RuvC complex processes Holliday junction (HJ) DNA during genetic recombination and DNA repair. Endonuclease that resolves HJ intermediates. Cleaves cruciform DNA by making single-stranded nicks across the HJ at symmetrical positions within the homologous arms, yielding a 5'-phosphate and a 3'-hydroxyl group; requires a central core of homology in the junction. The consensus cleavage sequence is 5'-(A/T)TT(C/G)-3'. Cleavage occurs on the 3'-side of the TT dinucleotide at the point of strand exchange. HJ branch migration catalyzed by RuvA-RuvB allows RuvC to scan DNA until it finds its consensus sequence, where it cleaves and resolves the cruciform DNA.</text>
</comment>
<comment type="catalytic activity">
    <reaction evidence="1">
        <text>Endonucleolytic cleavage at a junction such as a reciprocal single-stranded crossover between two homologous DNA duplexes (Holliday junction).</text>
        <dbReference type="EC" id="3.1.21.10"/>
    </reaction>
</comment>
<comment type="cofactor">
    <cofactor evidence="1">
        <name>Mg(2+)</name>
        <dbReference type="ChEBI" id="CHEBI:18420"/>
    </cofactor>
    <text evidence="1">Binds 2 Mg(2+) ion per subunit.</text>
</comment>
<comment type="subunit">
    <text evidence="1">Homodimer which binds Holliday junction (HJ) DNA. The HJ becomes 2-fold symmetrical on binding to RuvC with unstacked arms; it has a different conformation from HJ DNA in complex with RuvA. In the full resolvosome a probable DNA-RuvA(4)-RuvB(12)-RuvC(2) complex forms which resolves the HJ.</text>
</comment>
<comment type="subcellular location">
    <subcellularLocation>
        <location evidence="1">Cytoplasm</location>
    </subcellularLocation>
</comment>
<comment type="similarity">
    <text evidence="1">Belongs to the RuvC family.</text>
</comment>
<name>RUVC_CAMC5</name>
<reference key="1">
    <citation type="submission" date="2007-07" db="EMBL/GenBank/DDBJ databases">
        <title>Genome sequence of Campylobacter curvus 525.92 isolated from human feces.</title>
        <authorList>
            <person name="Fouts D.E."/>
            <person name="Mongodin E.F."/>
            <person name="Puiu D."/>
            <person name="Sebastian Y."/>
            <person name="Miller W.G."/>
            <person name="Mandrell R.E."/>
            <person name="Lastovica A.J."/>
            <person name="Nelson K.E."/>
        </authorList>
    </citation>
    <scope>NUCLEOTIDE SEQUENCE [LARGE SCALE GENOMIC DNA]</scope>
    <source>
        <strain>525.92</strain>
    </source>
</reference>